<feature type="chain" id="PRO_0000183321" description="Cytochrome c oxidase subunit 1">
    <location>
        <begin position="1"/>
        <end position="513"/>
    </location>
</feature>
<feature type="topological domain" description="Mitochondrial matrix" evidence="2">
    <location>
        <begin position="1"/>
        <end position="11"/>
    </location>
</feature>
<feature type="transmembrane region" description="Helical; Name=I" evidence="2">
    <location>
        <begin position="12"/>
        <end position="40"/>
    </location>
</feature>
<feature type="topological domain" description="Mitochondrial intermembrane" evidence="2">
    <location>
        <begin position="41"/>
        <end position="50"/>
    </location>
</feature>
<feature type="transmembrane region" description="Helical; Name=II" evidence="2">
    <location>
        <begin position="51"/>
        <end position="86"/>
    </location>
</feature>
<feature type="topological domain" description="Mitochondrial matrix" evidence="2">
    <location>
        <begin position="87"/>
        <end position="94"/>
    </location>
</feature>
<feature type="transmembrane region" description="Helical; Name=III" evidence="2">
    <location>
        <begin position="95"/>
        <end position="117"/>
    </location>
</feature>
<feature type="topological domain" description="Mitochondrial intermembrane" evidence="2">
    <location>
        <begin position="118"/>
        <end position="140"/>
    </location>
</feature>
<feature type="transmembrane region" description="Helical; Name=IV" evidence="2">
    <location>
        <begin position="141"/>
        <end position="170"/>
    </location>
</feature>
<feature type="topological domain" description="Mitochondrial matrix" evidence="2">
    <location>
        <begin position="171"/>
        <end position="182"/>
    </location>
</feature>
<feature type="transmembrane region" description="Helical; Name=V" evidence="2">
    <location>
        <begin position="183"/>
        <end position="212"/>
    </location>
</feature>
<feature type="topological domain" description="Mitochondrial intermembrane" evidence="2">
    <location>
        <begin position="213"/>
        <end position="227"/>
    </location>
</feature>
<feature type="transmembrane region" description="Helical; Name=VI" evidence="2">
    <location>
        <begin position="228"/>
        <end position="261"/>
    </location>
</feature>
<feature type="topological domain" description="Mitochondrial matrix" evidence="2">
    <location>
        <begin position="262"/>
        <end position="269"/>
    </location>
</feature>
<feature type="transmembrane region" description="Helical; Name=VII" evidence="2">
    <location>
        <begin position="270"/>
        <end position="286"/>
    </location>
</feature>
<feature type="topological domain" description="Mitochondrial intermembrane" evidence="2">
    <location>
        <begin position="287"/>
        <end position="298"/>
    </location>
</feature>
<feature type="transmembrane region" description="Helical; Name=VIII" evidence="2">
    <location>
        <begin position="299"/>
        <end position="327"/>
    </location>
</feature>
<feature type="topological domain" description="Mitochondrial matrix" evidence="2">
    <location>
        <begin position="328"/>
        <end position="335"/>
    </location>
</feature>
<feature type="transmembrane region" description="Helical; Name=IX" evidence="2">
    <location>
        <begin position="336"/>
        <end position="357"/>
    </location>
</feature>
<feature type="topological domain" description="Mitochondrial intermembrane" evidence="2">
    <location>
        <begin position="358"/>
        <end position="370"/>
    </location>
</feature>
<feature type="transmembrane region" description="Helical; Name=X" evidence="2">
    <location>
        <begin position="371"/>
        <end position="400"/>
    </location>
</feature>
<feature type="topological domain" description="Mitochondrial matrix" evidence="2">
    <location>
        <begin position="401"/>
        <end position="406"/>
    </location>
</feature>
<feature type="transmembrane region" description="Helical; Name=XI" evidence="2">
    <location>
        <begin position="407"/>
        <end position="433"/>
    </location>
</feature>
<feature type="topological domain" description="Mitochondrial intermembrane" evidence="2">
    <location>
        <begin position="434"/>
        <end position="446"/>
    </location>
</feature>
<feature type="transmembrane region" description="Helical; Name=XII" evidence="2">
    <location>
        <begin position="447"/>
        <end position="478"/>
    </location>
</feature>
<feature type="topological domain" description="Mitochondrial matrix" evidence="2">
    <location>
        <begin position="479"/>
        <end position="513"/>
    </location>
</feature>
<feature type="binding site" evidence="2">
    <location>
        <position position="40"/>
    </location>
    <ligand>
        <name>Na(+)</name>
        <dbReference type="ChEBI" id="CHEBI:29101"/>
    </ligand>
</feature>
<feature type="binding site" evidence="2">
    <location>
        <position position="45"/>
    </location>
    <ligand>
        <name>Na(+)</name>
        <dbReference type="ChEBI" id="CHEBI:29101"/>
    </ligand>
</feature>
<feature type="binding site" description="axial binding residue" evidence="2">
    <location>
        <position position="61"/>
    </location>
    <ligand>
        <name>Fe(II)-heme a</name>
        <dbReference type="ChEBI" id="CHEBI:61715"/>
        <note>low-spin</note>
    </ligand>
    <ligandPart>
        <name>Fe</name>
        <dbReference type="ChEBI" id="CHEBI:18248"/>
    </ligandPart>
</feature>
<feature type="binding site" evidence="2">
    <location>
        <position position="240"/>
    </location>
    <ligand>
        <name>Cu cation</name>
        <dbReference type="ChEBI" id="CHEBI:23378"/>
        <label>B</label>
    </ligand>
</feature>
<feature type="binding site" evidence="2">
    <location>
        <position position="244"/>
    </location>
    <ligand>
        <name>O2</name>
        <dbReference type="ChEBI" id="CHEBI:15379"/>
    </ligand>
</feature>
<feature type="binding site" evidence="2">
    <location>
        <position position="290"/>
    </location>
    <ligand>
        <name>Cu cation</name>
        <dbReference type="ChEBI" id="CHEBI:23378"/>
        <label>B</label>
    </ligand>
</feature>
<feature type="binding site" evidence="2">
    <location>
        <position position="291"/>
    </location>
    <ligand>
        <name>Cu cation</name>
        <dbReference type="ChEBI" id="CHEBI:23378"/>
        <label>B</label>
    </ligand>
</feature>
<feature type="binding site" evidence="2">
    <location>
        <position position="368"/>
    </location>
    <ligand>
        <name>Mg(2+)</name>
        <dbReference type="ChEBI" id="CHEBI:18420"/>
        <note>ligand shared with MT-CO2</note>
    </ligand>
</feature>
<feature type="binding site" evidence="2">
    <location>
        <position position="369"/>
    </location>
    <ligand>
        <name>Mg(2+)</name>
        <dbReference type="ChEBI" id="CHEBI:18420"/>
        <note>ligand shared with MT-CO2</note>
    </ligand>
</feature>
<feature type="binding site" description="axial binding residue" evidence="2">
    <location>
        <position position="376"/>
    </location>
    <ligand>
        <name>heme a3</name>
        <dbReference type="ChEBI" id="CHEBI:83282"/>
        <note>high-spin</note>
    </ligand>
    <ligandPart>
        <name>Fe</name>
        <dbReference type="ChEBI" id="CHEBI:18248"/>
    </ligandPart>
</feature>
<feature type="binding site" description="axial binding residue" evidence="2">
    <location>
        <position position="378"/>
    </location>
    <ligand>
        <name>Fe(II)-heme a</name>
        <dbReference type="ChEBI" id="CHEBI:61715"/>
        <note>low-spin</note>
    </ligand>
    <ligandPart>
        <name>Fe</name>
        <dbReference type="ChEBI" id="CHEBI:18248"/>
    </ligandPart>
</feature>
<feature type="binding site" evidence="2">
    <location>
        <position position="441"/>
    </location>
    <ligand>
        <name>Na(+)</name>
        <dbReference type="ChEBI" id="CHEBI:29101"/>
    </ligand>
</feature>
<feature type="cross-link" description="1'-histidyl-3'-tyrosine (His-Tyr)" evidence="2">
    <location>
        <begin position="240"/>
        <end position="244"/>
    </location>
</feature>
<dbReference type="EC" id="7.1.1.9"/>
<dbReference type="EMBL" id="Y11832">
    <property type="protein sequence ID" value="CAA72525.1"/>
    <property type="molecule type" value="Genomic_DNA"/>
</dbReference>
<dbReference type="PIR" id="T11443">
    <property type="entry name" value="T11443"/>
</dbReference>
<dbReference type="RefSeq" id="NP_007461.1">
    <property type="nucleotide sequence ID" value="NC_001821.1"/>
</dbReference>
<dbReference type="SMR" id="O21327"/>
<dbReference type="GeneID" id="808124"/>
<dbReference type="KEGG" id="dnm:808124"/>
<dbReference type="CTD" id="4512"/>
<dbReference type="HOGENOM" id="CLU_011899_7_3_1"/>
<dbReference type="OMA" id="WAMMSIG"/>
<dbReference type="UniPathway" id="UPA00705"/>
<dbReference type="GO" id="GO:0005743">
    <property type="term" value="C:mitochondrial inner membrane"/>
    <property type="evidence" value="ECO:0007669"/>
    <property type="project" value="UniProtKB-SubCell"/>
</dbReference>
<dbReference type="GO" id="GO:0045277">
    <property type="term" value="C:respiratory chain complex IV"/>
    <property type="evidence" value="ECO:0000250"/>
    <property type="project" value="UniProtKB"/>
</dbReference>
<dbReference type="GO" id="GO:0004129">
    <property type="term" value="F:cytochrome-c oxidase activity"/>
    <property type="evidence" value="ECO:0007669"/>
    <property type="project" value="UniProtKB-EC"/>
</dbReference>
<dbReference type="GO" id="GO:0020037">
    <property type="term" value="F:heme binding"/>
    <property type="evidence" value="ECO:0007669"/>
    <property type="project" value="InterPro"/>
</dbReference>
<dbReference type="GO" id="GO:0046872">
    <property type="term" value="F:metal ion binding"/>
    <property type="evidence" value="ECO:0007669"/>
    <property type="project" value="UniProtKB-KW"/>
</dbReference>
<dbReference type="GO" id="GO:0015990">
    <property type="term" value="P:electron transport coupled proton transport"/>
    <property type="evidence" value="ECO:0007669"/>
    <property type="project" value="TreeGrafter"/>
</dbReference>
<dbReference type="GO" id="GO:0006123">
    <property type="term" value="P:mitochondrial electron transport, cytochrome c to oxygen"/>
    <property type="evidence" value="ECO:0007669"/>
    <property type="project" value="TreeGrafter"/>
</dbReference>
<dbReference type="CDD" id="cd01663">
    <property type="entry name" value="Cyt_c_Oxidase_I"/>
    <property type="match status" value="1"/>
</dbReference>
<dbReference type="FunFam" id="1.20.210.10:FF:000001">
    <property type="entry name" value="Cytochrome c oxidase subunit 1"/>
    <property type="match status" value="1"/>
</dbReference>
<dbReference type="Gene3D" id="1.20.210.10">
    <property type="entry name" value="Cytochrome c oxidase-like, subunit I domain"/>
    <property type="match status" value="1"/>
</dbReference>
<dbReference type="InterPro" id="IPR023616">
    <property type="entry name" value="Cyt_c_oxase-like_su1_dom"/>
</dbReference>
<dbReference type="InterPro" id="IPR036927">
    <property type="entry name" value="Cyt_c_oxase-like_su1_sf"/>
</dbReference>
<dbReference type="InterPro" id="IPR000883">
    <property type="entry name" value="Cyt_C_Oxase_1"/>
</dbReference>
<dbReference type="InterPro" id="IPR023615">
    <property type="entry name" value="Cyt_c_Oxase_su1_BS"/>
</dbReference>
<dbReference type="InterPro" id="IPR033944">
    <property type="entry name" value="Cyt_c_oxase_su1_dom"/>
</dbReference>
<dbReference type="PANTHER" id="PTHR10422">
    <property type="entry name" value="CYTOCHROME C OXIDASE SUBUNIT 1"/>
    <property type="match status" value="1"/>
</dbReference>
<dbReference type="PANTHER" id="PTHR10422:SF18">
    <property type="entry name" value="CYTOCHROME C OXIDASE SUBUNIT 1"/>
    <property type="match status" value="1"/>
</dbReference>
<dbReference type="Pfam" id="PF00115">
    <property type="entry name" value="COX1"/>
    <property type="match status" value="1"/>
</dbReference>
<dbReference type="PRINTS" id="PR01165">
    <property type="entry name" value="CYCOXIDASEI"/>
</dbReference>
<dbReference type="SUPFAM" id="SSF81442">
    <property type="entry name" value="Cytochrome c oxidase subunit I-like"/>
    <property type="match status" value="1"/>
</dbReference>
<dbReference type="PROSITE" id="PS50855">
    <property type="entry name" value="COX1"/>
    <property type="match status" value="1"/>
</dbReference>
<dbReference type="PROSITE" id="PS00077">
    <property type="entry name" value="COX1_CUB"/>
    <property type="match status" value="1"/>
</dbReference>
<name>COX1_DASNO</name>
<keyword id="KW-0106">Calcium</keyword>
<keyword id="KW-0186">Copper</keyword>
<keyword id="KW-0249">Electron transport</keyword>
<keyword id="KW-0349">Heme</keyword>
<keyword id="KW-0408">Iron</keyword>
<keyword id="KW-0460">Magnesium</keyword>
<keyword id="KW-0472">Membrane</keyword>
<keyword id="KW-0479">Metal-binding</keyword>
<keyword id="KW-0496">Mitochondrion</keyword>
<keyword id="KW-0999">Mitochondrion inner membrane</keyword>
<keyword id="KW-0679">Respiratory chain</keyword>
<keyword id="KW-0915">Sodium</keyword>
<keyword id="KW-1278">Translocase</keyword>
<keyword id="KW-0812">Transmembrane</keyword>
<keyword id="KW-1133">Transmembrane helix</keyword>
<keyword id="KW-0813">Transport</keyword>
<evidence type="ECO:0000250" key="1">
    <source>
        <dbReference type="UniProtKB" id="P00395"/>
    </source>
</evidence>
<evidence type="ECO:0000250" key="2">
    <source>
        <dbReference type="UniProtKB" id="P00396"/>
    </source>
</evidence>
<evidence type="ECO:0000250" key="3">
    <source>
        <dbReference type="UniProtKB" id="P00401"/>
    </source>
</evidence>
<evidence type="ECO:0000305" key="4"/>
<accession>O21327</accession>
<geneLocation type="mitochondrion"/>
<proteinExistence type="inferred from homology"/>
<gene>
    <name type="primary">MT-CO1</name>
    <name type="synonym">COI</name>
    <name type="synonym">COXI</name>
    <name type="synonym">MTCO1</name>
</gene>
<organism>
    <name type="scientific">Dasypus novemcinctus</name>
    <name type="common">Nine-banded armadillo</name>
    <dbReference type="NCBI Taxonomy" id="9361"/>
    <lineage>
        <taxon>Eukaryota</taxon>
        <taxon>Metazoa</taxon>
        <taxon>Chordata</taxon>
        <taxon>Craniata</taxon>
        <taxon>Vertebrata</taxon>
        <taxon>Euteleostomi</taxon>
        <taxon>Mammalia</taxon>
        <taxon>Eutheria</taxon>
        <taxon>Xenarthra</taxon>
        <taxon>Cingulata</taxon>
        <taxon>Dasypodidae</taxon>
        <taxon>Dasypus</taxon>
    </lineage>
</organism>
<comment type="function">
    <text evidence="3">Component of the cytochrome c oxidase, the last enzyme in the mitochondrial electron transport chain which drives oxidative phosphorylation. The respiratory chain contains 3 multisubunit complexes succinate dehydrogenase (complex II, CII), ubiquinol-cytochrome c oxidoreductase (cytochrome b-c1 complex, complex III, CIII) and cytochrome c oxidase (complex IV, CIV), that cooperate to transfer electrons derived from NADH and succinate to molecular oxygen, creating an electrochemical gradient over the inner membrane that drives transmembrane transport and the ATP synthase. Cytochrome c oxidase is the component of the respiratory chain that catalyzes the reduction of oxygen to water. Electrons originating from reduced cytochrome c in the intermembrane space (IMS) are transferred via the dinuclear copper A center (CU(A)) of subunit 2 and heme A of subunit 1 to the active site in subunit 1, a binuclear center (BNC) formed by heme A3 and copper B (CU(B)). The BNC reduces molecular oxygen to 2 water molecules using 4 electrons from cytochrome c in the IMS and 4 protons from the mitochondrial matrix.</text>
</comment>
<comment type="catalytic activity">
    <reaction evidence="3">
        <text>4 Fe(II)-[cytochrome c] + O2 + 8 H(+)(in) = 4 Fe(III)-[cytochrome c] + 2 H2O + 4 H(+)(out)</text>
        <dbReference type="Rhea" id="RHEA:11436"/>
        <dbReference type="Rhea" id="RHEA-COMP:10350"/>
        <dbReference type="Rhea" id="RHEA-COMP:14399"/>
        <dbReference type="ChEBI" id="CHEBI:15377"/>
        <dbReference type="ChEBI" id="CHEBI:15378"/>
        <dbReference type="ChEBI" id="CHEBI:15379"/>
        <dbReference type="ChEBI" id="CHEBI:29033"/>
        <dbReference type="ChEBI" id="CHEBI:29034"/>
        <dbReference type="EC" id="7.1.1.9"/>
    </reaction>
    <physiologicalReaction direction="left-to-right" evidence="3">
        <dbReference type="Rhea" id="RHEA:11437"/>
    </physiologicalReaction>
</comment>
<comment type="cofactor">
    <cofactor evidence="2">
        <name>heme</name>
        <dbReference type="ChEBI" id="CHEBI:30413"/>
    </cofactor>
    <text evidence="2">Binds 2 heme A groups non-covalently per subunit.</text>
</comment>
<comment type="cofactor">
    <cofactor evidence="2">
        <name>Cu cation</name>
        <dbReference type="ChEBI" id="CHEBI:23378"/>
    </cofactor>
    <text evidence="2">Binds a copper B center.</text>
</comment>
<comment type="pathway">
    <text evidence="3">Energy metabolism; oxidative phosphorylation.</text>
</comment>
<comment type="subunit">
    <text evidence="1 2">Component of the cytochrome c oxidase (complex IV, CIV), a multisubunit enzyme composed of 14 subunits. The complex is composed of a catalytic core of 3 subunits MT-CO1, MT-CO2 and MT-CO3, encoded in the mitochondrial DNA, and 11 supernumerary subunits COX4I, COX5A, COX5B, COX6A, COX6B, COX6C, COX7A, COX7B, COX7C, COX8 and NDUFA4, which are encoded in the nuclear genome. The complex exists as a monomer or a dimer and forms supercomplexes (SCs) in the inner mitochondrial membrane with NADH-ubiquinone oxidoreductase (complex I, CI) and ubiquinol-cytochrome c oxidoreductase (cytochrome b-c1 complex, complex III, CIII), resulting in different assemblies (supercomplex SCI(1)III(2)IV(1) and megacomplex MCI(2)III(2)IV(2)) (By similarity). As a newly synthesized protein, rapidly incorporates into a multi-subunit assembly intermediate in the inner membrane, called MITRAC (mitochondrial translation regulation assembly intermediate of cytochrome c oxidase) complex, whose core components are COA3/MITRAC12 and COX14. Within the MITRAC complex, interacts with COA3 and with SMIM20/MITRAC7; the interaction with SMIM20 stabilizes the newly synthesized MT-CO1 and prevents its premature turnover. Interacts with TMEM177 in a COX20-dependent manner (By similarity).</text>
</comment>
<comment type="subcellular location">
    <subcellularLocation>
        <location evidence="2">Mitochondrion inner membrane</location>
        <topology evidence="2">Multi-pass membrane protein</topology>
    </subcellularLocation>
</comment>
<comment type="similarity">
    <text evidence="4">Belongs to the heme-copper respiratory oxidase family.</text>
</comment>
<sequence length="513" mass="56956">MFITRWLFSTNHKDIGTLYLLFGAWAGMVGTALSLLIRAELGQPGTLLGDDQIYNVIVTAHAFIMIFFMVMPIMIGGFGNWLVPLMIGAPDMAFPRMNNMSFWLLPPSFLLLLASSMVEAGAGTGWTVYPPLAGNLAHAGASVDLTIFSLHLAGISSILGAINFITTIINMKPPAMTQYQTPLFVWSVLVTAVLLLLSLPVLAAGITMLLTDRNLNTTFFDPAGGGDPILYQHLFWFFGHPEVYILILPGFGMISHIVTYYSGKKEPFGYMGMVWAMMSIGFLGFIVWAHHMFTVGMDVDTRAYFTSATMIIAIPTGVKVFSWLATLHGGNIKWSPAMLWALGFIFLFTVGGLTGMLLANSSLDIVLHDTYYVVAHFHYVLSMGAVFAIMGGFVHWFPLFSGYTLNLTWAKIHFIIMFVGVNLTFFPQHFLGLSGMPRRYSDYPDAYTMWNTVSSMGSFISLTAVMLMIFMIWEAFASKREVDVVELTPTNLEWLHGCPPPYHTFEEPAFVKV</sequence>
<protein>
    <recommendedName>
        <fullName>Cytochrome c oxidase subunit 1</fullName>
        <ecNumber>7.1.1.9</ecNumber>
    </recommendedName>
    <alternativeName>
        <fullName>Cytochrome c oxidase polypeptide I</fullName>
    </alternativeName>
</protein>
<reference key="1">
    <citation type="journal article" date="1997" name="Mol. Biol. Evol.">
        <title>Phylogenetic analyses of mitochondrial DNA suggest a sister group relationship between Xenarthra (Edentata) and Ferungulates.</title>
        <authorList>
            <person name="Arnason U."/>
            <person name="Gullberg A."/>
            <person name="Janke A."/>
        </authorList>
    </citation>
    <scope>NUCLEOTIDE SEQUENCE [GENOMIC DNA]</scope>
</reference>